<protein>
    <recommendedName>
        <fullName>Beta sliding clamp</fullName>
        <shortName>Beta clamp</shortName>
        <shortName>Sliding clamp</shortName>
    </recommendedName>
    <alternativeName>
        <fullName>Beta-clamp processivity factor</fullName>
    </alternativeName>
    <alternativeName>
        <fullName>DNA polymerase III beta sliding clamp subunit</fullName>
    </alternativeName>
    <alternativeName>
        <fullName>DNA polymerase III subunit beta</fullName>
    </alternativeName>
</protein>
<comment type="function">
    <text evidence="1">Confers DNA tethering and processivity to DNA polymerases and other proteins. Acts as a clamp, forming a ring around DNA (a reaction catalyzed by the clamp-loading complex) which diffuses in an ATP-independent manner freely and bidirectionally along dsDNA. Initially characterized for its ability to contact the catalytic subunit of DNA polymerase III (Pol III), a complex, multichain enzyme responsible for most of the replicative synthesis in bacteria; Pol III exhibits 3'-5' exonuclease proofreading activity. The beta chain is required for initiation of replication as well as for processivity of DNA replication.</text>
</comment>
<comment type="subunit">
    <text evidence="1">Forms a ring-shaped head-to-tail homodimer around DNA which binds and tethers DNA polymerases and other proteins to the DNA. The DNA replisome complex has a single clamp-loading complex (3 tau and 1 each of delta, delta', psi and chi subunits) which binds 3 Pol III cores (1 core on the leading strand and 2 on the lagging strand) each with a beta sliding clamp dimer. Additional proteins in the replisome are other copies of gamma, psi and chi, Ssb, DNA helicase and RNA primase.</text>
</comment>
<comment type="subcellular location">
    <subcellularLocation>
        <location evidence="1">Cytoplasm</location>
    </subcellularLocation>
</comment>
<comment type="similarity">
    <text evidence="2">Belongs to the beta sliding clamp family.</text>
</comment>
<feature type="chain" id="PRO_0000105425" description="Beta sliding clamp">
    <location>
        <begin position="1"/>
        <end position="385"/>
    </location>
</feature>
<feature type="sequence conflict" description="In Ref. 2; AAB91514." evidence="2" ref="2">
    <original>N</original>
    <variation>S</variation>
    <location>
        <position position="86"/>
    </location>
</feature>
<feature type="helix" evidence="3">
    <location>
        <begin position="2"/>
        <end position="4"/>
    </location>
</feature>
<feature type="strand" evidence="3">
    <location>
        <begin position="5"/>
        <end position="10"/>
    </location>
</feature>
<feature type="helix" evidence="3">
    <location>
        <begin position="11"/>
        <end position="21"/>
    </location>
</feature>
<feature type="helix" evidence="3">
    <location>
        <begin position="22"/>
        <end position="24"/>
    </location>
</feature>
<feature type="helix" evidence="3">
    <location>
        <begin position="33"/>
        <end position="35"/>
    </location>
</feature>
<feature type="strand" evidence="3">
    <location>
        <begin position="36"/>
        <end position="42"/>
    </location>
</feature>
<feature type="strand" evidence="3">
    <location>
        <begin position="45"/>
        <end position="51"/>
    </location>
</feature>
<feature type="strand" evidence="3">
    <location>
        <begin position="53"/>
        <end position="62"/>
    </location>
</feature>
<feature type="strand" evidence="3">
    <location>
        <begin position="64"/>
        <end position="67"/>
    </location>
</feature>
<feature type="strand" evidence="3">
    <location>
        <begin position="69"/>
        <end position="74"/>
    </location>
</feature>
<feature type="helix" evidence="3">
    <location>
        <begin position="75"/>
        <end position="84"/>
    </location>
</feature>
<feature type="turn" evidence="3">
    <location>
        <begin position="85"/>
        <end position="87"/>
    </location>
</feature>
<feature type="strand" evidence="3">
    <location>
        <begin position="88"/>
        <end position="96"/>
    </location>
</feature>
<feature type="turn" evidence="3">
    <location>
        <begin position="97"/>
        <end position="100"/>
    </location>
</feature>
<feature type="strand" evidence="3">
    <location>
        <begin position="101"/>
        <end position="106"/>
    </location>
</feature>
<feature type="strand" evidence="3">
    <location>
        <begin position="118"/>
        <end position="122"/>
    </location>
</feature>
<feature type="helix" evidence="3">
    <location>
        <begin position="127"/>
        <end position="132"/>
    </location>
</feature>
<feature type="strand" evidence="3">
    <location>
        <begin position="142"/>
        <end position="148"/>
    </location>
</feature>
<feature type="helix" evidence="3">
    <location>
        <begin position="149"/>
        <end position="159"/>
    </location>
</feature>
<feature type="helix" evidence="3">
    <location>
        <begin position="160"/>
        <end position="162"/>
    </location>
</feature>
<feature type="turn" evidence="3">
    <location>
        <begin position="170"/>
        <end position="173"/>
    </location>
</feature>
<feature type="strand" evidence="3">
    <location>
        <begin position="174"/>
        <end position="179"/>
    </location>
</feature>
<feature type="strand" evidence="3">
    <location>
        <begin position="184"/>
        <end position="190"/>
    </location>
</feature>
<feature type="strand" evidence="3">
    <location>
        <begin position="192"/>
        <end position="203"/>
    </location>
</feature>
<feature type="strand" evidence="3">
    <location>
        <begin position="210"/>
        <end position="213"/>
    </location>
</feature>
<feature type="helix" evidence="3">
    <location>
        <begin position="215"/>
        <end position="223"/>
    </location>
</feature>
<feature type="strand" evidence="3">
    <location>
        <begin position="226"/>
        <end position="234"/>
    </location>
</feature>
<feature type="strand" evidence="3">
    <location>
        <begin position="236"/>
        <end position="243"/>
    </location>
</feature>
<feature type="strand" evidence="3">
    <location>
        <begin position="246"/>
        <end position="251"/>
    </location>
</feature>
<feature type="helix" evidence="3">
    <location>
        <begin position="260"/>
        <end position="263"/>
    </location>
</feature>
<feature type="strand" evidence="3">
    <location>
        <begin position="269"/>
        <end position="275"/>
    </location>
</feature>
<feature type="helix" evidence="3">
    <location>
        <begin position="276"/>
        <end position="286"/>
    </location>
</feature>
<feature type="helix" evidence="3">
    <location>
        <begin position="287"/>
        <end position="289"/>
    </location>
</feature>
<feature type="strand" evidence="3">
    <location>
        <begin position="295"/>
        <end position="300"/>
    </location>
</feature>
<feature type="strand" evidence="3">
    <location>
        <begin position="302"/>
        <end position="310"/>
    </location>
</feature>
<feature type="turn" evidence="3">
    <location>
        <begin position="312"/>
        <end position="314"/>
    </location>
</feature>
<feature type="strand" evidence="3">
    <location>
        <begin position="317"/>
        <end position="323"/>
    </location>
</feature>
<feature type="strand" evidence="3">
    <location>
        <begin position="326"/>
        <end position="331"/>
    </location>
</feature>
<feature type="strand" evidence="3">
    <location>
        <begin position="334"/>
        <end position="339"/>
    </location>
</feature>
<feature type="helix" evidence="3">
    <location>
        <begin position="340"/>
        <end position="347"/>
    </location>
</feature>
<feature type="strand" evidence="3">
    <location>
        <begin position="352"/>
        <end position="359"/>
    </location>
</feature>
<feature type="strand" evidence="3">
    <location>
        <begin position="365"/>
        <end position="368"/>
    </location>
</feature>
<feature type="strand" evidence="3">
    <location>
        <begin position="374"/>
        <end position="379"/>
    </location>
</feature>
<sequence>MLHNTFFICETNQIMNEIEKAKGIILNRNMNDIWSALLIEVKKSNLIIKSTDRNIFFESTISIVSETDFKVLINASNFYDAVKAFNFYKKIKIVFNENNSKLEIMGELNDEKEEYEDHLKEPTFSYEEIENYNYDMVNEDYTFGIEIKQKSFKKVINRIAFSAHLDESKNVLNGVYFSKDEDSKLLLVSTNGHRMSICKTEVIVEEDVNFIVPVKIFNFLKHLMSGEGMVKIKFSDKKFYVEFDNYKIACSLINGNYPDYKSIIPKEQKNKSLVSLGILKDRLARVNLYVDKSRKLVLTFSELQLKLLGEDLITGRKGEFFIKDPNYLYDGADEVMAINISYFVEAISVFETSKIEIQFNSGNVLKLSEPENFNFTHLIMPMSLG</sequence>
<proteinExistence type="evidence at protein level"/>
<organism>
    <name type="scientific">Borreliella burgdorferi (strain ATCC 35210 / DSM 4680 / CIP 102532 / B31)</name>
    <name type="common">Borrelia burgdorferi</name>
    <dbReference type="NCBI Taxonomy" id="224326"/>
    <lineage>
        <taxon>Bacteria</taxon>
        <taxon>Pseudomonadati</taxon>
        <taxon>Spirochaetota</taxon>
        <taxon>Spirochaetia</taxon>
        <taxon>Spirochaetales</taxon>
        <taxon>Borreliaceae</taxon>
        <taxon>Borreliella</taxon>
    </lineage>
</organism>
<name>DPO3B_BORBU</name>
<gene>
    <name type="primary">dnaN</name>
    <name type="ordered locus">BB_0438</name>
</gene>
<accession>P33761</accession>
<accession>O51397</accession>
<keyword id="KW-0002">3D-structure</keyword>
<keyword id="KW-0963">Cytoplasm</keyword>
<keyword id="KW-0235">DNA replication</keyword>
<keyword id="KW-0238">DNA-binding</keyword>
<keyword id="KW-0239">DNA-directed DNA polymerase</keyword>
<keyword id="KW-0548">Nucleotidyltransferase</keyword>
<keyword id="KW-1185">Reference proteome</keyword>
<keyword id="KW-0808">Transferase</keyword>
<evidence type="ECO:0000250" key="1">
    <source>
        <dbReference type="UniProtKB" id="P0A988"/>
    </source>
</evidence>
<evidence type="ECO:0000305" key="2"/>
<evidence type="ECO:0007829" key="3">
    <source>
        <dbReference type="PDB" id="6DJ8"/>
    </source>
</evidence>
<reference key="1">
    <citation type="journal article" date="1993" name="Nucleic Acids Res.">
        <title>Nucleotide sequence of the Borrelia burgdorferi dnaN gene encoding the beta subunit of DNA polymerase III.</title>
        <authorList>
            <person name="Old I.G."/>
            <person name="Margarita D."/>
            <person name="Saint-Girons I."/>
        </authorList>
    </citation>
    <scope>NUCLEOTIDE SEQUENCE [GENOMIC DNA]</scope>
    <source>
        <strain>212</strain>
    </source>
</reference>
<reference key="2">
    <citation type="journal article" date="1997" name="Nature">
        <title>Genomic sequence of a Lyme disease spirochaete, Borrelia burgdorferi.</title>
        <authorList>
            <person name="Fraser C.M."/>
            <person name="Casjens S."/>
            <person name="Huang W.M."/>
            <person name="Sutton G.G."/>
            <person name="Clayton R.A."/>
            <person name="Lathigra R."/>
            <person name="White O."/>
            <person name="Ketchum K.A."/>
            <person name="Dodson R.J."/>
            <person name="Hickey E.K."/>
            <person name="Gwinn M.L."/>
            <person name="Dougherty B.A."/>
            <person name="Tomb J.-F."/>
            <person name="Fleischmann R.D."/>
            <person name="Richardson D.L."/>
            <person name="Peterson J.D."/>
            <person name="Kerlavage A.R."/>
            <person name="Quackenbush J."/>
            <person name="Salzberg S.L."/>
            <person name="Hanson M."/>
            <person name="van Vugt R."/>
            <person name="Palmer N."/>
            <person name="Adams M.D."/>
            <person name="Gocayne J.D."/>
            <person name="Weidman J.F."/>
            <person name="Utterback T.R."/>
            <person name="Watthey L."/>
            <person name="McDonald L.A."/>
            <person name="Artiach P."/>
            <person name="Bowman C."/>
            <person name="Garland S.A."/>
            <person name="Fujii C."/>
            <person name="Cotton M.D."/>
            <person name="Horst K."/>
            <person name="Roberts K.M."/>
            <person name="Hatch B."/>
            <person name="Smith H.O."/>
            <person name="Venter J.C."/>
        </authorList>
    </citation>
    <scope>NUCLEOTIDE SEQUENCE [LARGE SCALE GENOMIC DNA]</scope>
    <source>
        <strain>ATCC 35210 / DSM 4680 / CIP 102532 / B31</strain>
    </source>
</reference>
<reference key="3">
    <citation type="journal article" date="1993" name="FEMS Microbiol. Lett.">
        <title>Unique genetic arrangement in the dnaA region of the Borrelia burgdorferi linear chromosome: nucleotide sequence of the dnaA gene.</title>
        <authorList>
            <person name="Old I.G."/>
            <person name="Margarita D."/>
            <person name="Saint-Girons I."/>
        </authorList>
    </citation>
    <scope>NUCLEOTIDE SEQUENCE [GENOMIC DNA] OF 1-28</scope>
    <source>
        <strain>212</strain>
    </source>
</reference>
<dbReference type="EMBL" id="U04527">
    <property type="protein sequence ID" value="AAA58942.1"/>
    <property type="molecule type" value="Genomic_DNA"/>
</dbReference>
<dbReference type="EMBL" id="AE000783">
    <property type="protein sequence ID" value="AAB91514.1"/>
    <property type="molecule type" value="Genomic_DNA"/>
</dbReference>
<dbReference type="PIR" id="E70154">
    <property type="entry name" value="E70154"/>
</dbReference>
<dbReference type="RefSeq" id="NP_212572.1">
    <property type="nucleotide sequence ID" value="NC_001318.1"/>
</dbReference>
<dbReference type="PDB" id="6DJ8">
    <property type="method" value="X-ray"/>
    <property type="resolution" value="2.05 A"/>
    <property type="chains" value="A/B=1-385"/>
</dbReference>
<dbReference type="PDBsum" id="6DJ8"/>
<dbReference type="SMR" id="P33761"/>
<dbReference type="STRING" id="224326.BB_0438"/>
<dbReference type="PaxDb" id="224326-BB_0438"/>
<dbReference type="EnsemblBacteria" id="AAB91514">
    <property type="protein sequence ID" value="AAB91514"/>
    <property type="gene ID" value="BB_0438"/>
</dbReference>
<dbReference type="GeneID" id="56567869"/>
<dbReference type="KEGG" id="bbu:BB_0438"/>
<dbReference type="PATRIC" id="fig|224326.49.peg.829"/>
<dbReference type="HOGENOM" id="CLU_038149_2_1_12"/>
<dbReference type="OrthoDB" id="8421503at2"/>
<dbReference type="Proteomes" id="UP000001807">
    <property type="component" value="Chromosome"/>
</dbReference>
<dbReference type="GO" id="GO:0005737">
    <property type="term" value="C:cytoplasm"/>
    <property type="evidence" value="ECO:0007669"/>
    <property type="project" value="UniProtKB-SubCell"/>
</dbReference>
<dbReference type="GO" id="GO:0009360">
    <property type="term" value="C:DNA polymerase III complex"/>
    <property type="evidence" value="ECO:0007669"/>
    <property type="project" value="InterPro"/>
</dbReference>
<dbReference type="GO" id="GO:0008408">
    <property type="term" value="F:3'-5' exonuclease activity"/>
    <property type="evidence" value="ECO:0007669"/>
    <property type="project" value="InterPro"/>
</dbReference>
<dbReference type="GO" id="GO:0003677">
    <property type="term" value="F:DNA binding"/>
    <property type="evidence" value="ECO:0007669"/>
    <property type="project" value="UniProtKB-KW"/>
</dbReference>
<dbReference type="GO" id="GO:0003887">
    <property type="term" value="F:DNA-directed DNA polymerase activity"/>
    <property type="evidence" value="ECO:0007669"/>
    <property type="project" value="UniProtKB-KW"/>
</dbReference>
<dbReference type="GO" id="GO:0006271">
    <property type="term" value="P:DNA strand elongation involved in DNA replication"/>
    <property type="evidence" value="ECO:0007669"/>
    <property type="project" value="TreeGrafter"/>
</dbReference>
<dbReference type="CDD" id="cd00140">
    <property type="entry name" value="beta_clamp"/>
    <property type="match status" value="1"/>
</dbReference>
<dbReference type="Gene3D" id="3.70.10.10">
    <property type="match status" value="1"/>
</dbReference>
<dbReference type="Gene3D" id="3.10.150.10">
    <property type="entry name" value="DNA Polymerase III, subunit A, domain 2"/>
    <property type="match status" value="1"/>
</dbReference>
<dbReference type="InterPro" id="IPR046938">
    <property type="entry name" value="DNA_clamp_sf"/>
</dbReference>
<dbReference type="InterPro" id="IPR001001">
    <property type="entry name" value="DNA_polIII_beta"/>
</dbReference>
<dbReference type="InterPro" id="IPR022635">
    <property type="entry name" value="DNA_polIII_beta_C"/>
</dbReference>
<dbReference type="InterPro" id="IPR022637">
    <property type="entry name" value="DNA_polIII_beta_cen"/>
</dbReference>
<dbReference type="InterPro" id="IPR022634">
    <property type="entry name" value="DNA_polIII_beta_N"/>
</dbReference>
<dbReference type="NCBIfam" id="TIGR00663">
    <property type="entry name" value="dnan"/>
    <property type="match status" value="1"/>
</dbReference>
<dbReference type="PANTHER" id="PTHR30478:SF0">
    <property type="entry name" value="BETA SLIDING CLAMP"/>
    <property type="match status" value="1"/>
</dbReference>
<dbReference type="PANTHER" id="PTHR30478">
    <property type="entry name" value="DNA POLYMERASE III SUBUNIT BETA"/>
    <property type="match status" value="1"/>
</dbReference>
<dbReference type="Pfam" id="PF00712">
    <property type="entry name" value="DNA_pol3_beta"/>
    <property type="match status" value="1"/>
</dbReference>
<dbReference type="Pfam" id="PF02767">
    <property type="entry name" value="DNA_pol3_beta_2"/>
    <property type="match status" value="1"/>
</dbReference>
<dbReference type="Pfam" id="PF02768">
    <property type="entry name" value="DNA_pol3_beta_3"/>
    <property type="match status" value="1"/>
</dbReference>
<dbReference type="SMART" id="SM00480">
    <property type="entry name" value="POL3Bc"/>
    <property type="match status" value="1"/>
</dbReference>
<dbReference type="SUPFAM" id="SSF55979">
    <property type="entry name" value="DNA clamp"/>
    <property type="match status" value="3"/>
</dbReference>